<accession>P52101</accession>
<accession>P76587</accession>
<accession>Q2MAH4</accession>
<comment type="function">
    <text evidence="3 4">Member of the two-component regulatory system GlrR/GlrK that up-regulates transcription of the glmY sRNA when cells enter the stationary growth phase. Activates GlrR by phosphorylation.</text>
</comment>
<comment type="catalytic activity">
    <reaction>
        <text>ATP + protein L-histidine = ADP + protein N-phospho-L-histidine.</text>
        <dbReference type="EC" id="2.7.13.3"/>
    </reaction>
</comment>
<comment type="subcellular location">
    <subcellularLocation>
        <location>Cell inner membrane</location>
        <topology>Multi-pass membrane protein</topology>
    </subcellularLocation>
</comment>
<comment type="PTM">
    <text>Autophosphorylated.</text>
</comment>
<comment type="disruption phenotype">
    <text evidence="4">Mutants show decreased amounts of glmY.</text>
</comment>
<comment type="miscellaneous">
    <text>Not required for the regulation of the glmY-glmZ-glmS regulatory cascade by glucosamine-6-phosphate depletion.</text>
</comment>
<comment type="sequence caution" evidence="5">
    <conflict type="erroneous initiation">
        <sequence resource="EMBL-CDS" id="AAA79818"/>
    </conflict>
    <text>Truncated N-terminus.</text>
</comment>
<dbReference type="EC" id="2.7.13.3"/>
<dbReference type="EMBL" id="U36841">
    <property type="protein sequence ID" value="AAA79818.1"/>
    <property type="status" value="ALT_INIT"/>
    <property type="molecule type" value="Genomic_DNA"/>
</dbReference>
<dbReference type="EMBL" id="U00096">
    <property type="protein sequence ID" value="AAC75609.2"/>
    <property type="molecule type" value="Genomic_DNA"/>
</dbReference>
<dbReference type="EMBL" id="AP009048">
    <property type="protein sequence ID" value="BAE76732.1"/>
    <property type="molecule type" value="Genomic_DNA"/>
</dbReference>
<dbReference type="PIR" id="C65033">
    <property type="entry name" value="C65033"/>
</dbReference>
<dbReference type="RefSeq" id="NP_417051.2">
    <property type="nucleotide sequence ID" value="NC_000913.3"/>
</dbReference>
<dbReference type="SMR" id="P52101"/>
<dbReference type="BioGRID" id="4259204">
    <property type="interactions" value="4"/>
</dbReference>
<dbReference type="DIP" id="DIP-12052N"/>
<dbReference type="FunCoup" id="P52101">
    <property type="interactions" value="277"/>
</dbReference>
<dbReference type="STRING" id="511145.b2556"/>
<dbReference type="jPOST" id="P52101"/>
<dbReference type="PaxDb" id="511145-b2556"/>
<dbReference type="EnsemblBacteria" id="AAC75609">
    <property type="protein sequence ID" value="AAC75609"/>
    <property type="gene ID" value="b2556"/>
</dbReference>
<dbReference type="GeneID" id="947013"/>
<dbReference type="KEGG" id="ecj:JW5407"/>
<dbReference type="KEGG" id="eco:b2556"/>
<dbReference type="KEGG" id="ecoc:C3026_14150"/>
<dbReference type="PATRIC" id="fig|511145.12.peg.2658"/>
<dbReference type="EchoBASE" id="EB3234"/>
<dbReference type="eggNOG" id="COG2205">
    <property type="taxonomic scope" value="Bacteria"/>
</dbReference>
<dbReference type="HOGENOM" id="CLU_000445_89_23_6"/>
<dbReference type="InParanoid" id="P52101"/>
<dbReference type="OMA" id="IAQDCIK"/>
<dbReference type="OrthoDB" id="9804645at2"/>
<dbReference type="PhylomeDB" id="P52101"/>
<dbReference type="BioCyc" id="EcoCyc:G7345-MONOMER"/>
<dbReference type="BioCyc" id="MetaCyc:G7345-MONOMER"/>
<dbReference type="PRO" id="PR:P52101"/>
<dbReference type="Proteomes" id="UP000000625">
    <property type="component" value="Chromosome"/>
</dbReference>
<dbReference type="GO" id="GO:0030288">
    <property type="term" value="C:outer membrane-bounded periplasmic space"/>
    <property type="evidence" value="ECO:0000255"/>
    <property type="project" value="EcoCyc"/>
</dbReference>
<dbReference type="GO" id="GO:0005886">
    <property type="term" value="C:plasma membrane"/>
    <property type="evidence" value="ECO:0000255"/>
    <property type="project" value="EcoCyc"/>
</dbReference>
<dbReference type="GO" id="GO:0005524">
    <property type="term" value="F:ATP binding"/>
    <property type="evidence" value="ECO:0007669"/>
    <property type="project" value="UniProtKB-KW"/>
</dbReference>
<dbReference type="GO" id="GO:0000156">
    <property type="term" value="F:phosphorelay response regulator activity"/>
    <property type="evidence" value="ECO:0000318"/>
    <property type="project" value="GO_Central"/>
</dbReference>
<dbReference type="GO" id="GO:0000155">
    <property type="term" value="F:phosphorelay sensor kinase activity"/>
    <property type="evidence" value="ECO:0000314"/>
    <property type="project" value="EcoCyc"/>
</dbReference>
<dbReference type="GO" id="GO:0016774">
    <property type="term" value="F:phosphotransferase activity, carboxyl group as acceptor"/>
    <property type="evidence" value="ECO:0000314"/>
    <property type="project" value="EcoCyc"/>
</dbReference>
<dbReference type="GO" id="GO:0004673">
    <property type="term" value="F:protein histidine kinase activity"/>
    <property type="evidence" value="ECO:0000314"/>
    <property type="project" value="EcoCyc"/>
</dbReference>
<dbReference type="GO" id="GO:0030295">
    <property type="term" value="F:protein kinase activator activity"/>
    <property type="evidence" value="ECO:0000318"/>
    <property type="project" value="GO_Central"/>
</dbReference>
<dbReference type="GO" id="GO:0055082">
    <property type="term" value="P:intracellular chemical homeostasis"/>
    <property type="evidence" value="ECO:0000314"/>
    <property type="project" value="EcoCyc"/>
</dbReference>
<dbReference type="GO" id="GO:0007234">
    <property type="term" value="P:osmosensory signaling via phosphorelay pathway"/>
    <property type="evidence" value="ECO:0000318"/>
    <property type="project" value="GO_Central"/>
</dbReference>
<dbReference type="GO" id="GO:0071871">
    <property type="term" value="P:response to epinephrine"/>
    <property type="evidence" value="ECO:0000314"/>
    <property type="project" value="EcoCyc"/>
</dbReference>
<dbReference type="GO" id="GO:0007165">
    <property type="term" value="P:signal transduction"/>
    <property type="evidence" value="ECO:0000314"/>
    <property type="project" value="EcoCyc"/>
</dbReference>
<dbReference type="CDD" id="cd00082">
    <property type="entry name" value="HisKA"/>
    <property type="match status" value="1"/>
</dbReference>
<dbReference type="FunFam" id="3.30.565.10:FF:000072">
    <property type="entry name" value="Sensor histidine kinase GlrK"/>
    <property type="match status" value="1"/>
</dbReference>
<dbReference type="FunFam" id="1.10.287.130:FF:000039">
    <property type="entry name" value="Sensor-like histidine kinase YfhK"/>
    <property type="match status" value="1"/>
</dbReference>
<dbReference type="Gene3D" id="1.10.287.130">
    <property type="match status" value="1"/>
</dbReference>
<dbReference type="Gene3D" id="3.30.565.10">
    <property type="entry name" value="Histidine kinase-like ATPase, C-terminal domain"/>
    <property type="match status" value="1"/>
</dbReference>
<dbReference type="InterPro" id="IPR003660">
    <property type="entry name" value="HAMP_dom"/>
</dbReference>
<dbReference type="InterPro" id="IPR036890">
    <property type="entry name" value="HATPase_C_sf"/>
</dbReference>
<dbReference type="InterPro" id="IPR005467">
    <property type="entry name" value="His_kinase_dom"/>
</dbReference>
<dbReference type="InterPro" id="IPR003661">
    <property type="entry name" value="HisK_dim/P_dom"/>
</dbReference>
<dbReference type="InterPro" id="IPR036097">
    <property type="entry name" value="HisK_dim/P_sf"/>
</dbReference>
<dbReference type="InterPro" id="IPR052545">
    <property type="entry name" value="Light-responsive_reg"/>
</dbReference>
<dbReference type="InterPro" id="IPR004358">
    <property type="entry name" value="Sig_transdc_His_kin-like_C"/>
</dbReference>
<dbReference type="PANTHER" id="PTHR42878:SF7">
    <property type="entry name" value="SENSOR HISTIDINE KINASE GLRK"/>
    <property type="match status" value="1"/>
</dbReference>
<dbReference type="PANTHER" id="PTHR42878">
    <property type="entry name" value="TWO-COMPONENT HISTIDINE KINASE"/>
    <property type="match status" value="1"/>
</dbReference>
<dbReference type="Pfam" id="PF00672">
    <property type="entry name" value="HAMP"/>
    <property type="match status" value="1"/>
</dbReference>
<dbReference type="Pfam" id="PF02518">
    <property type="entry name" value="HATPase_c"/>
    <property type="match status" value="1"/>
</dbReference>
<dbReference type="Pfam" id="PF00512">
    <property type="entry name" value="HisKA"/>
    <property type="match status" value="1"/>
</dbReference>
<dbReference type="PRINTS" id="PR00344">
    <property type="entry name" value="BCTRLSENSOR"/>
</dbReference>
<dbReference type="SMART" id="SM00387">
    <property type="entry name" value="HATPase_c"/>
    <property type="match status" value="1"/>
</dbReference>
<dbReference type="SMART" id="SM00388">
    <property type="entry name" value="HisKA"/>
    <property type="match status" value="1"/>
</dbReference>
<dbReference type="SUPFAM" id="SSF55874">
    <property type="entry name" value="ATPase domain of HSP90 chaperone/DNA topoisomerase II/histidine kinase"/>
    <property type="match status" value="1"/>
</dbReference>
<dbReference type="SUPFAM" id="SSF47384">
    <property type="entry name" value="Homodimeric domain of signal transducing histidine kinase"/>
    <property type="match status" value="1"/>
</dbReference>
<dbReference type="PROSITE" id="PS50109">
    <property type="entry name" value="HIS_KIN"/>
    <property type="match status" value="1"/>
</dbReference>
<sequence length="475" mass="53330">MKRWPVFPRSLRQLVMLAFLLILLPLLVLAWQAWQSLNALSDQAALVNRTTLIDARRSEAMTNAALEMERSYRQYCVLDDPTLAKVYQSQRKRYSEMLDAHAGVLPDDKLYQALRQDLHNLAQLQCNNSGPDAAAAARLEAFASANTEMVQATRTVVFSRGQQLQREIAERGQYFGWQSLVLFLVSLVMVLLFTRMIIGPVKNIERMINRLGEGRSLGNSVSFSGPSELRSVGQRILWLSERLSWLESQRHQFLRHLSHELKTPLASMREGTELLADQVVGPLTPEQKEVVSILDSSSRNLQKLIEQLLDYNRKQADSAVELENVELAPLVETVVSAHSLPARAKMMHTDVDLKATACLAEPMLLMSVLDNLYSNAVHYGAESGNICLRSSLHGARVYIDVINTGTPIPQEERAMIFEPFFQGSHQRKGAVKGSGLGLSIARDCIRRMQGELYLVDESGQDVCFRIELPSSKNTK</sequence>
<organism>
    <name type="scientific">Escherichia coli (strain K12)</name>
    <dbReference type="NCBI Taxonomy" id="83333"/>
    <lineage>
        <taxon>Bacteria</taxon>
        <taxon>Pseudomonadati</taxon>
        <taxon>Pseudomonadota</taxon>
        <taxon>Gammaproteobacteria</taxon>
        <taxon>Enterobacterales</taxon>
        <taxon>Enterobacteriaceae</taxon>
        <taxon>Escherichia</taxon>
    </lineage>
</organism>
<feature type="chain" id="PRO_0000074915" description="Sensor histidine kinase GlrK">
    <location>
        <begin position="1"/>
        <end position="475"/>
    </location>
</feature>
<feature type="topological domain" description="Cytoplasmic" evidence="1">
    <location>
        <begin position="1"/>
        <end position="13"/>
    </location>
</feature>
<feature type="transmembrane region" description="Helical" evidence="1">
    <location>
        <begin position="14"/>
        <end position="34"/>
    </location>
</feature>
<feature type="topological domain" description="Periplasmic" evidence="1">
    <location>
        <begin position="35"/>
        <end position="173"/>
    </location>
</feature>
<feature type="transmembrane region" description="Helical" evidence="1">
    <location>
        <begin position="174"/>
        <end position="194"/>
    </location>
</feature>
<feature type="topological domain" description="Cytoplasmic" evidence="1">
    <location>
        <begin position="195"/>
        <end position="475"/>
    </location>
</feature>
<feature type="domain" description="Histidine kinase" evidence="2">
    <location>
        <begin position="256"/>
        <end position="472"/>
    </location>
</feature>
<feature type="modified residue" description="Phosphohistidine; by autocatalysis" evidence="2">
    <location>
        <position position="259"/>
    </location>
</feature>
<proteinExistence type="evidence at protein level"/>
<evidence type="ECO:0000255" key="1"/>
<evidence type="ECO:0000255" key="2">
    <source>
        <dbReference type="PROSITE-ProRule" id="PRU00107"/>
    </source>
</evidence>
<evidence type="ECO:0000269" key="3">
    <source>
    </source>
</evidence>
<evidence type="ECO:0000269" key="4">
    <source>
    </source>
</evidence>
<evidence type="ECO:0000305" key="5"/>
<keyword id="KW-0067">ATP-binding</keyword>
<keyword id="KW-0997">Cell inner membrane</keyword>
<keyword id="KW-1003">Cell membrane</keyword>
<keyword id="KW-0418">Kinase</keyword>
<keyword id="KW-0472">Membrane</keyword>
<keyword id="KW-0547">Nucleotide-binding</keyword>
<keyword id="KW-0597">Phosphoprotein</keyword>
<keyword id="KW-1185">Reference proteome</keyword>
<keyword id="KW-0808">Transferase</keyword>
<keyword id="KW-0812">Transmembrane</keyword>
<keyword id="KW-1133">Transmembrane helix</keyword>
<keyword id="KW-0902">Two-component regulatory system</keyword>
<reference key="1">
    <citation type="journal article" date="1997" name="Science">
        <title>The complete genome sequence of Escherichia coli K-12.</title>
        <authorList>
            <person name="Blattner F.R."/>
            <person name="Plunkett G. III"/>
            <person name="Bloch C.A."/>
            <person name="Perna N.T."/>
            <person name="Burland V."/>
            <person name="Riley M."/>
            <person name="Collado-Vides J."/>
            <person name="Glasner J.D."/>
            <person name="Rode C.K."/>
            <person name="Mayhew G.F."/>
            <person name="Gregor J."/>
            <person name="Davis N.W."/>
            <person name="Kirkpatrick H.A."/>
            <person name="Goeden M.A."/>
            <person name="Rose D.J."/>
            <person name="Mau B."/>
            <person name="Shao Y."/>
        </authorList>
    </citation>
    <scope>NUCLEOTIDE SEQUENCE [LARGE SCALE GENOMIC DNA]</scope>
    <source>
        <strain>K12 / MG1655 / ATCC 47076</strain>
    </source>
</reference>
<reference key="2">
    <citation type="journal article" date="2006" name="Mol. Syst. Biol.">
        <title>Highly accurate genome sequences of Escherichia coli K-12 strains MG1655 and W3110.</title>
        <authorList>
            <person name="Hayashi K."/>
            <person name="Morooka N."/>
            <person name="Yamamoto Y."/>
            <person name="Fujita K."/>
            <person name="Isono K."/>
            <person name="Choi S."/>
            <person name="Ohtsubo E."/>
            <person name="Baba T."/>
            <person name="Wanner B.L."/>
            <person name="Mori H."/>
            <person name="Horiuchi T."/>
        </authorList>
    </citation>
    <scope>NUCLEOTIDE SEQUENCE [LARGE SCALE GENOMIC DNA]</scope>
    <source>
        <strain>K12 / W3110 / ATCC 27325 / DSM 5911</strain>
    </source>
</reference>
<reference key="3">
    <citation type="journal article" date="2005" name="J. Biol. Chem.">
        <title>Functional characterization in vitro of all two-component signal transduction systems from Escherichia coli.</title>
        <authorList>
            <person name="Yamamoto K."/>
            <person name="Hirao K."/>
            <person name="Oshima T."/>
            <person name="Aiba H."/>
            <person name="Utsumi R."/>
            <person name="Ishihama A."/>
        </authorList>
    </citation>
    <scope>FUNCTION</scope>
    <scope>AUTOPHOSPHORYLATION</scope>
    <source>
        <strain>K12 / W3110 / ATCC 27325 / DSM 5911</strain>
    </source>
</reference>
<reference key="4">
    <citation type="journal article" date="2005" name="Science">
        <title>Global topology analysis of the Escherichia coli inner membrane proteome.</title>
        <authorList>
            <person name="Daley D.O."/>
            <person name="Rapp M."/>
            <person name="Granseth E."/>
            <person name="Melen K."/>
            <person name="Drew D."/>
            <person name="von Heijne G."/>
        </authorList>
    </citation>
    <scope>TOPOLOGY [LARGE SCALE ANALYSIS]</scope>
    <source>
        <strain>K12 / MG1655 / ATCC 47076</strain>
    </source>
</reference>
<reference key="5">
    <citation type="journal article" date="2009" name="Mol. Microbiol.">
        <title>Dual control by perfectly overlapping sigma 54- and sigma 70-promoters adjusts small RNA GlmY expression to different environmental signals.</title>
        <authorList>
            <person name="Reichenbach B."/>
            <person name="Gopel Y."/>
            <person name="Gorke B."/>
        </authorList>
    </citation>
    <scope>FUNCTION</scope>
    <scope>DISRUPTION PHENOTYPE</scope>
    <scope>GENE NAME</scope>
</reference>
<gene>
    <name type="primary">glrK</name>
    <name type="synonym">yfhK</name>
    <name type="ordered locus">b2556</name>
    <name type="ordered locus">JW5407</name>
</gene>
<name>GLRK_ECOLI</name>
<protein>
    <recommendedName>
        <fullName>Sensor histidine kinase GlrK</fullName>
        <ecNumber>2.7.13.3</ecNumber>
    </recommendedName>
</protein>